<keyword id="KW-0169">Cobalamin biosynthesis</keyword>
<keyword id="KW-0489">Methyltransferase</keyword>
<keyword id="KW-1185">Reference proteome</keyword>
<keyword id="KW-0949">S-adenosyl-L-methionine</keyword>
<keyword id="KW-0808">Transferase</keyword>
<sequence length="355" mass="37726">MRGNTALMSTLKRFGITTGATAAAASKASVIFLIKNETPKTVTIPTPIGLRLEISVGNYSRKESEFCASAKKFSGDNPDILDGLEIIACSGRSNSQTITITAEEGVGTITRPGLKGDVGDKSISPIAKQMIIDAVKEVVSSGVYVKLYVPKGEELAKNTMNPLVGVEGGISILGTTGIEYPVSDEDYIEHIKSEACVVKSTGHKTLVLAPGNTSFKFAREIYGDKVIKIGDNVGSSLKVAEELGFSQVILVSLPGKLVKVAAGMLNTHSKFGDARLETLTFSSVVAGISLEKIQKIVKSLSISEGLSYLTDEERQKVMKVVSDRALEKLKRVSKLKLGVVVISEDGKIMAKSGEV</sequence>
<proteinExistence type="inferred from homology"/>
<protein>
    <recommendedName>
        <fullName evidence="1">Cobalt-precorrin-5B C(1)-methyltransferase</fullName>
        <ecNumber evidence="1">2.1.1.195</ecNumber>
    </recommendedName>
    <alternativeName>
        <fullName evidence="1">Cobalt-precorrin-6A synthase</fullName>
    </alternativeName>
</protein>
<evidence type="ECO:0000255" key="1">
    <source>
        <dbReference type="HAMAP-Rule" id="MF_00787"/>
    </source>
</evidence>
<feature type="chain" id="PRO_0000141698" description="Cobalt-precorrin-5B C(1)-methyltransferase">
    <location>
        <begin position="1"/>
        <end position="355"/>
    </location>
</feature>
<name>CBID_SULAC</name>
<gene>
    <name evidence="1" type="primary">cbiD</name>
    <name type="ordered locus">Saci_0397</name>
</gene>
<comment type="function">
    <text evidence="1">Catalyzes the methylation of C-1 in cobalt-precorrin-5B to form cobalt-precorrin-6A.</text>
</comment>
<comment type="catalytic activity">
    <reaction evidence="1">
        <text>Co-precorrin-5B + S-adenosyl-L-methionine = Co-precorrin-6A + S-adenosyl-L-homocysteine</text>
        <dbReference type="Rhea" id="RHEA:26285"/>
        <dbReference type="ChEBI" id="CHEBI:57856"/>
        <dbReference type="ChEBI" id="CHEBI:59789"/>
        <dbReference type="ChEBI" id="CHEBI:60063"/>
        <dbReference type="ChEBI" id="CHEBI:60064"/>
        <dbReference type="EC" id="2.1.1.195"/>
    </reaction>
</comment>
<comment type="pathway">
    <text evidence="1">Cofactor biosynthesis; adenosylcobalamin biosynthesis; cob(II)yrinate a,c-diamide from sirohydrochlorin (anaerobic route): step 6/10.</text>
</comment>
<comment type="similarity">
    <text evidence="1">Belongs to the CbiD family.</text>
</comment>
<dbReference type="EC" id="2.1.1.195" evidence="1"/>
<dbReference type="EMBL" id="CP000077">
    <property type="protein sequence ID" value="AAY79813.1"/>
    <property type="molecule type" value="Genomic_DNA"/>
</dbReference>
<dbReference type="SMR" id="Q4JBL6"/>
<dbReference type="STRING" id="330779.Saci_0397"/>
<dbReference type="KEGG" id="sai:Saci_0397"/>
<dbReference type="PATRIC" id="fig|330779.12.peg.395"/>
<dbReference type="eggNOG" id="arCOG04383">
    <property type="taxonomic scope" value="Archaea"/>
</dbReference>
<dbReference type="HOGENOM" id="CLU_041273_1_0_2"/>
<dbReference type="UniPathway" id="UPA00148">
    <property type="reaction ID" value="UER00227"/>
</dbReference>
<dbReference type="Proteomes" id="UP000001018">
    <property type="component" value="Chromosome"/>
</dbReference>
<dbReference type="GO" id="GO:0043780">
    <property type="term" value="F:cobalt-precorrin-5B C1-methyltransferase activity"/>
    <property type="evidence" value="ECO:0007669"/>
    <property type="project" value="RHEA"/>
</dbReference>
<dbReference type="GO" id="GO:0019251">
    <property type="term" value="P:anaerobic cobalamin biosynthetic process"/>
    <property type="evidence" value="ECO:0007669"/>
    <property type="project" value="UniProtKB-UniRule"/>
</dbReference>
<dbReference type="GO" id="GO:0032259">
    <property type="term" value="P:methylation"/>
    <property type="evidence" value="ECO:0007669"/>
    <property type="project" value="UniProtKB-KW"/>
</dbReference>
<dbReference type="Gene3D" id="3.30.2110.10">
    <property type="entry name" value="CbiD-like"/>
    <property type="match status" value="1"/>
</dbReference>
<dbReference type="HAMAP" id="MF_00787">
    <property type="entry name" value="CbiD"/>
    <property type="match status" value="1"/>
</dbReference>
<dbReference type="InterPro" id="IPR002748">
    <property type="entry name" value="CbiD"/>
</dbReference>
<dbReference type="InterPro" id="IPR036074">
    <property type="entry name" value="CbiD_sf"/>
</dbReference>
<dbReference type="NCBIfam" id="TIGR00312">
    <property type="entry name" value="cbiD"/>
    <property type="match status" value="1"/>
</dbReference>
<dbReference type="PANTHER" id="PTHR35863">
    <property type="entry name" value="COBALT-PRECORRIN-5B C(1)-METHYLTRANSFERASE"/>
    <property type="match status" value="1"/>
</dbReference>
<dbReference type="PANTHER" id="PTHR35863:SF1">
    <property type="entry name" value="COBALT-PRECORRIN-5B C(1)-METHYLTRANSFERASE"/>
    <property type="match status" value="1"/>
</dbReference>
<dbReference type="Pfam" id="PF01888">
    <property type="entry name" value="CbiD"/>
    <property type="match status" value="1"/>
</dbReference>
<dbReference type="PIRSF" id="PIRSF026782">
    <property type="entry name" value="CbiD"/>
    <property type="match status" value="1"/>
</dbReference>
<dbReference type="SUPFAM" id="SSF111342">
    <property type="entry name" value="CbiD-like"/>
    <property type="match status" value="1"/>
</dbReference>
<organism>
    <name type="scientific">Sulfolobus acidocaldarius (strain ATCC 33909 / DSM 639 / JCM 8929 / NBRC 15157 / NCIMB 11770)</name>
    <dbReference type="NCBI Taxonomy" id="330779"/>
    <lineage>
        <taxon>Archaea</taxon>
        <taxon>Thermoproteota</taxon>
        <taxon>Thermoprotei</taxon>
        <taxon>Sulfolobales</taxon>
        <taxon>Sulfolobaceae</taxon>
        <taxon>Sulfolobus</taxon>
    </lineage>
</organism>
<reference key="1">
    <citation type="journal article" date="2005" name="J. Bacteriol.">
        <title>The genome of Sulfolobus acidocaldarius, a model organism of the Crenarchaeota.</title>
        <authorList>
            <person name="Chen L."/>
            <person name="Bruegger K."/>
            <person name="Skovgaard M."/>
            <person name="Redder P."/>
            <person name="She Q."/>
            <person name="Torarinsson E."/>
            <person name="Greve B."/>
            <person name="Awayez M."/>
            <person name="Zibat A."/>
            <person name="Klenk H.-P."/>
            <person name="Garrett R.A."/>
        </authorList>
    </citation>
    <scope>NUCLEOTIDE SEQUENCE [LARGE SCALE GENOMIC DNA]</scope>
    <source>
        <strain>ATCC 33909 / DSM 639 / JCM 8929 / NBRC 15157 / NCIMB 11770</strain>
    </source>
</reference>
<accession>Q4JBL6</accession>